<feature type="initiator methionine" description="Removed" evidence="2">
    <location>
        <position position="1"/>
    </location>
</feature>
<feature type="chain" id="PRO_0000139590" description="Hypoxanthine-guanine phosphoribosyltransferase">
    <location>
        <begin position="2"/>
        <end position="218"/>
    </location>
</feature>
<feature type="active site" description="Proton acceptor" evidence="1">
    <location>
        <position position="138"/>
    </location>
</feature>
<feature type="binding site" evidence="1">
    <location>
        <position position="69"/>
    </location>
    <ligand>
        <name>GMP</name>
        <dbReference type="ChEBI" id="CHEBI:58115"/>
    </ligand>
</feature>
<feature type="binding site" evidence="1">
    <location>
        <begin position="134"/>
        <end position="142"/>
    </location>
    <ligand>
        <name>GMP</name>
        <dbReference type="ChEBI" id="CHEBI:58115"/>
    </ligand>
</feature>
<feature type="binding site" evidence="1">
    <location>
        <position position="166"/>
    </location>
    <ligand>
        <name>GMP</name>
        <dbReference type="ChEBI" id="CHEBI:58115"/>
    </ligand>
</feature>
<feature type="binding site" evidence="1">
    <location>
        <begin position="186"/>
        <end position="188"/>
    </location>
    <ligand>
        <name>GMP</name>
        <dbReference type="ChEBI" id="CHEBI:58115"/>
    </ligand>
</feature>
<feature type="binding site" evidence="1">
    <location>
        <position position="194"/>
    </location>
    <ligand>
        <name>GMP</name>
        <dbReference type="ChEBI" id="CHEBI:58115"/>
    </ligand>
</feature>
<feature type="binding site" evidence="1">
    <location>
        <position position="194"/>
    </location>
    <ligand>
        <name>Mg(2+)</name>
        <dbReference type="ChEBI" id="CHEBI:18420"/>
    </ligand>
</feature>
<feature type="modified residue" description="N-acetylalanine" evidence="2">
    <location>
        <position position="2"/>
    </location>
</feature>
<feature type="modified residue" description="N6-acetyllysine" evidence="3">
    <location>
        <position position="103"/>
    </location>
</feature>
<feature type="modified residue" description="Phosphothreonine" evidence="4">
    <location>
        <position position="142"/>
    </location>
</feature>
<feature type="cross-link" description="Glycyl lysine isopeptide (Lys-Gly) (interchain with G-Cter in SUMO1); alternate" evidence="2">
    <location>
        <position position="115"/>
    </location>
</feature>
<feature type="cross-link" description="Glycyl lysine isopeptide (Lys-Gly) (interchain with G-Cter in SUMO2); alternate" evidence="2">
    <location>
        <position position="115"/>
    </location>
</feature>
<reference key="1">
    <citation type="submission" date="2005-07" db="EMBL/GenBank/DDBJ databases">
        <title>Gene targeting and chromosome engineering in porcine cells.</title>
        <authorList>
            <person name="Carlson D.F."/>
            <person name="Clark K.J."/>
            <person name="Shiroma D.S."/>
            <person name="Fahrenkrug S.C."/>
        </authorList>
    </citation>
    <scope>NUCLEOTIDE SEQUENCE [MRNA]</scope>
</reference>
<reference key="2">
    <citation type="submission" date="2006-07" db="EMBL/GenBank/DDBJ databases">
        <title>Selection of reference genes for gene expression studies in pig tissues using SYBR green qPCR.</title>
        <authorList>
            <person name="Nygaard A.-B."/>
            <person name="Joergensen C.B."/>
            <person name="Cirera S."/>
            <person name="Fredholm M."/>
        </authorList>
    </citation>
    <scope>NUCLEOTIDE SEQUENCE [MRNA]</scope>
</reference>
<dbReference type="EC" id="2.4.2.8" evidence="2"/>
<dbReference type="EMBL" id="DQ136030">
    <property type="protein sequence ID" value="AAZ43258.1"/>
    <property type="molecule type" value="mRNA"/>
</dbReference>
<dbReference type="EMBL" id="DQ845175">
    <property type="protein sequence ID" value="ABI29189.1"/>
    <property type="molecule type" value="mRNA"/>
</dbReference>
<dbReference type="RefSeq" id="NP_001027548.1">
    <property type="nucleotide sequence ID" value="NM_001032376.2"/>
</dbReference>
<dbReference type="SMR" id="Q45FY6"/>
<dbReference type="FunCoup" id="Q45FY6">
    <property type="interactions" value="449"/>
</dbReference>
<dbReference type="IntAct" id="Q45FY6">
    <property type="interactions" value="2"/>
</dbReference>
<dbReference type="STRING" id="9823.ENSSSCP00000041929"/>
<dbReference type="PaxDb" id="9823-ENSSSCP00000025410"/>
<dbReference type="PeptideAtlas" id="Q45FY6"/>
<dbReference type="Ensembl" id="ENSSSCT00000051852.3">
    <property type="protein sequence ID" value="ENSSSCP00000044832.1"/>
    <property type="gene ID" value="ENSSSCG00000034896.3"/>
</dbReference>
<dbReference type="Ensembl" id="ENSSSCT00025061056.1">
    <property type="protein sequence ID" value="ENSSSCP00025025924.1"/>
    <property type="gene ID" value="ENSSSCG00025044949.1"/>
</dbReference>
<dbReference type="Ensembl" id="ENSSSCT00030047570.1">
    <property type="protein sequence ID" value="ENSSSCP00030021430.1"/>
    <property type="gene ID" value="ENSSSCG00030034364.1"/>
</dbReference>
<dbReference type="Ensembl" id="ENSSSCT00035006457.1">
    <property type="protein sequence ID" value="ENSSSCP00035002255.1"/>
    <property type="gene ID" value="ENSSSCG00035005142.1"/>
</dbReference>
<dbReference type="Ensembl" id="ENSSSCT00040034674.1">
    <property type="protein sequence ID" value="ENSSSCP00040014343.1"/>
    <property type="gene ID" value="ENSSSCG00040025932.1"/>
</dbReference>
<dbReference type="Ensembl" id="ENSSSCT00045052993.1">
    <property type="protein sequence ID" value="ENSSSCP00045036866.1"/>
    <property type="gene ID" value="ENSSSCG00045031043.1"/>
</dbReference>
<dbReference type="Ensembl" id="ENSSSCT00050037335.1">
    <property type="protein sequence ID" value="ENSSSCP00050015522.1"/>
    <property type="gene ID" value="ENSSSCG00050027741.1"/>
</dbReference>
<dbReference type="Ensembl" id="ENSSSCT00055013340.1">
    <property type="protein sequence ID" value="ENSSSCP00055010490.1"/>
    <property type="gene ID" value="ENSSSCG00055006870.1"/>
</dbReference>
<dbReference type="Ensembl" id="ENSSSCT00060077778.1">
    <property type="protein sequence ID" value="ENSSSCP00060033612.1"/>
    <property type="gene ID" value="ENSSSCG00060057082.1"/>
</dbReference>
<dbReference type="Ensembl" id="ENSSSCT00065066896.1">
    <property type="protein sequence ID" value="ENSSSCP00065029032.1"/>
    <property type="gene ID" value="ENSSSCG00065048888.1"/>
</dbReference>
<dbReference type="Ensembl" id="ENSSSCT00085036219">
    <property type="protein sequence ID" value="ENSSSCP00085024915"/>
    <property type="gene ID" value="ENSSSCG00085019090"/>
</dbReference>
<dbReference type="Ensembl" id="ENSSSCT00105057311">
    <property type="protein sequence ID" value="ENSSSCP00105040388"/>
    <property type="gene ID" value="ENSSSCG00105030169"/>
</dbReference>
<dbReference type="Ensembl" id="ENSSSCT00110042006">
    <property type="protein sequence ID" value="ENSSSCP00110029492"/>
    <property type="gene ID" value="ENSSSCG00110021662"/>
</dbReference>
<dbReference type="Ensembl" id="ENSSSCT00115002379">
    <property type="protein sequence ID" value="ENSSSCP00115002228"/>
    <property type="gene ID" value="ENSSSCG00115001406"/>
</dbReference>
<dbReference type="Ensembl" id="ENSSSCT00130042187">
    <property type="protein sequence ID" value="ENSSSCP00130029867"/>
    <property type="gene ID" value="ENSSSCG00130021693"/>
</dbReference>
<dbReference type="GeneID" id="397351"/>
<dbReference type="KEGG" id="ssc:397351"/>
<dbReference type="CTD" id="3251"/>
<dbReference type="VGNC" id="VGNC:109457">
    <property type="gene designation" value="HPRT1"/>
</dbReference>
<dbReference type="eggNOG" id="KOG3367">
    <property type="taxonomic scope" value="Eukaryota"/>
</dbReference>
<dbReference type="GeneTree" id="ENSGT00940000155028"/>
<dbReference type="InParanoid" id="Q45FY6"/>
<dbReference type="OMA" id="MQWRVAP"/>
<dbReference type="OrthoDB" id="9449045at2759"/>
<dbReference type="Reactome" id="R-SSC-74217">
    <property type="pathway name" value="Purine salvage"/>
</dbReference>
<dbReference type="Reactome" id="R-SSC-9748787">
    <property type="pathway name" value="Azathioprine ADME"/>
</dbReference>
<dbReference type="UniPathway" id="UPA00591">
    <property type="reaction ID" value="UER00648"/>
</dbReference>
<dbReference type="Proteomes" id="UP000008227">
    <property type="component" value="Chromosome X"/>
</dbReference>
<dbReference type="Proteomes" id="UP000314985">
    <property type="component" value="Unplaced"/>
</dbReference>
<dbReference type="Proteomes" id="UP000694570">
    <property type="component" value="Unplaced"/>
</dbReference>
<dbReference type="Proteomes" id="UP000694571">
    <property type="component" value="Unplaced"/>
</dbReference>
<dbReference type="Proteomes" id="UP000694720">
    <property type="component" value="Unplaced"/>
</dbReference>
<dbReference type="Proteomes" id="UP000694722">
    <property type="component" value="Unplaced"/>
</dbReference>
<dbReference type="Proteomes" id="UP000694723">
    <property type="component" value="Unplaced"/>
</dbReference>
<dbReference type="Proteomes" id="UP000694724">
    <property type="component" value="Unplaced"/>
</dbReference>
<dbReference type="Proteomes" id="UP000694725">
    <property type="component" value="Unplaced"/>
</dbReference>
<dbReference type="Proteomes" id="UP000694726">
    <property type="component" value="Unplaced"/>
</dbReference>
<dbReference type="Proteomes" id="UP000694727">
    <property type="component" value="Unplaced"/>
</dbReference>
<dbReference type="Proteomes" id="UP000694728">
    <property type="component" value="Unplaced"/>
</dbReference>
<dbReference type="Bgee" id="ENSSSCG00000034896">
    <property type="expression patterns" value="Expressed in Ammon's horn and 44 other cell types or tissues"/>
</dbReference>
<dbReference type="ExpressionAtlas" id="Q45FY6">
    <property type="expression patterns" value="baseline and differential"/>
</dbReference>
<dbReference type="GO" id="GO:0005737">
    <property type="term" value="C:cytoplasm"/>
    <property type="evidence" value="ECO:0000250"/>
    <property type="project" value="UniProtKB"/>
</dbReference>
<dbReference type="GO" id="GO:0005829">
    <property type="term" value="C:cytosol"/>
    <property type="evidence" value="ECO:0000318"/>
    <property type="project" value="GO_Central"/>
</dbReference>
<dbReference type="GO" id="GO:0052657">
    <property type="term" value="F:guanine phosphoribosyltransferase activity"/>
    <property type="evidence" value="ECO:0000250"/>
    <property type="project" value="UniProtKB"/>
</dbReference>
<dbReference type="GO" id="GO:0004422">
    <property type="term" value="F:hypoxanthine phosphoribosyltransferase activity"/>
    <property type="evidence" value="ECO:0000250"/>
    <property type="project" value="UniProtKB"/>
</dbReference>
<dbReference type="GO" id="GO:0042802">
    <property type="term" value="F:identical protein binding"/>
    <property type="evidence" value="ECO:0000250"/>
    <property type="project" value="UniProtKB"/>
</dbReference>
<dbReference type="GO" id="GO:0000287">
    <property type="term" value="F:magnesium ion binding"/>
    <property type="evidence" value="ECO:0000250"/>
    <property type="project" value="UniProtKB"/>
</dbReference>
<dbReference type="GO" id="GO:0000166">
    <property type="term" value="F:nucleotide binding"/>
    <property type="evidence" value="ECO:0007669"/>
    <property type="project" value="UniProtKB-KW"/>
</dbReference>
<dbReference type="GO" id="GO:0046038">
    <property type="term" value="P:GMP catabolic process"/>
    <property type="evidence" value="ECO:0000250"/>
    <property type="project" value="UniProtKB"/>
</dbReference>
<dbReference type="GO" id="GO:0032263">
    <property type="term" value="P:GMP salvage"/>
    <property type="evidence" value="ECO:0000318"/>
    <property type="project" value="GO_Central"/>
</dbReference>
<dbReference type="GO" id="GO:0006178">
    <property type="term" value="P:guanine salvage"/>
    <property type="evidence" value="ECO:0000250"/>
    <property type="project" value="UniProtKB"/>
</dbReference>
<dbReference type="GO" id="GO:0046100">
    <property type="term" value="P:hypoxanthine metabolic process"/>
    <property type="evidence" value="ECO:0000250"/>
    <property type="project" value="UniProtKB"/>
</dbReference>
<dbReference type="GO" id="GO:0043103">
    <property type="term" value="P:hypoxanthine salvage"/>
    <property type="evidence" value="ECO:0000250"/>
    <property type="project" value="UniProtKB"/>
</dbReference>
<dbReference type="GO" id="GO:0046040">
    <property type="term" value="P:IMP metabolic process"/>
    <property type="evidence" value="ECO:0000250"/>
    <property type="project" value="UniProtKB"/>
</dbReference>
<dbReference type="GO" id="GO:0032264">
    <property type="term" value="P:IMP salvage"/>
    <property type="evidence" value="ECO:0000318"/>
    <property type="project" value="GO_Central"/>
</dbReference>
<dbReference type="GO" id="GO:0045964">
    <property type="term" value="P:positive regulation of dopamine metabolic process"/>
    <property type="evidence" value="ECO:0000250"/>
    <property type="project" value="UniProtKB"/>
</dbReference>
<dbReference type="GO" id="GO:0006164">
    <property type="term" value="P:purine nucleotide biosynthetic process"/>
    <property type="evidence" value="ECO:0000250"/>
    <property type="project" value="UniProtKB"/>
</dbReference>
<dbReference type="GO" id="GO:0006166">
    <property type="term" value="P:purine ribonucleoside salvage"/>
    <property type="evidence" value="ECO:0000250"/>
    <property type="project" value="UniProtKB"/>
</dbReference>
<dbReference type="CDD" id="cd06223">
    <property type="entry name" value="PRTases_typeI"/>
    <property type="match status" value="1"/>
</dbReference>
<dbReference type="FunFam" id="3.40.50.2020:FF:000019">
    <property type="entry name" value="Hypoxanthine phosphoribosyltransferase"/>
    <property type="match status" value="1"/>
</dbReference>
<dbReference type="Gene3D" id="3.40.50.2020">
    <property type="match status" value="1"/>
</dbReference>
<dbReference type="InterPro" id="IPR050408">
    <property type="entry name" value="HGPRT"/>
</dbReference>
<dbReference type="InterPro" id="IPR005904">
    <property type="entry name" value="Hxn_phspho_trans"/>
</dbReference>
<dbReference type="InterPro" id="IPR000836">
    <property type="entry name" value="PRibTrfase_dom"/>
</dbReference>
<dbReference type="InterPro" id="IPR029057">
    <property type="entry name" value="PRTase-like"/>
</dbReference>
<dbReference type="NCBIfam" id="TIGR01203">
    <property type="entry name" value="HGPRTase"/>
    <property type="match status" value="1"/>
</dbReference>
<dbReference type="PANTHER" id="PTHR43340">
    <property type="entry name" value="HYPOXANTHINE-GUANINE PHOSPHORIBOSYLTRANSFERASE"/>
    <property type="match status" value="1"/>
</dbReference>
<dbReference type="PANTHER" id="PTHR43340:SF6">
    <property type="entry name" value="HYPOXANTHINE-GUANINE PHOSPHORIBOSYLTRANSFERASE"/>
    <property type="match status" value="1"/>
</dbReference>
<dbReference type="Pfam" id="PF00156">
    <property type="entry name" value="Pribosyltran"/>
    <property type="match status" value="1"/>
</dbReference>
<dbReference type="SUPFAM" id="SSF53271">
    <property type="entry name" value="PRTase-like"/>
    <property type="match status" value="1"/>
</dbReference>
<dbReference type="PROSITE" id="PS00103">
    <property type="entry name" value="PUR_PYR_PR_TRANSFER"/>
    <property type="match status" value="1"/>
</dbReference>
<organism>
    <name type="scientific">Sus scrofa</name>
    <name type="common">Pig</name>
    <dbReference type="NCBI Taxonomy" id="9823"/>
    <lineage>
        <taxon>Eukaryota</taxon>
        <taxon>Metazoa</taxon>
        <taxon>Chordata</taxon>
        <taxon>Craniata</taxon>
        <taxon>Vertebrata</taxon>
        <taxon>Euteleostomi</taxon>
        <taxon>Mammalia</taxon>
        <taxon>Eutheria</taxon>
        <taxon>Laurasiatheria</taxon>
        <taxon>Artiodactyla</taxon>
        <taxon>Suina</taxon>
        <taxon>Suidae</taxon>
        <taxon>Sus</taxon>
    </lineage>
</organism>
<proteinExistence type="evidence at transcript level"/>
<evidence type="ECO:0000250" key="1"/>
<evidence type="ECO:0000250" key="2">
    <source>
        <dbReference type="UniProtKB" id="P00492"/>
    </source>
</evidence>
<evidence type="ECO:0000250" key="3">
    <source>
        <dbReference type="UniProtKB" id="P00493"/>
    </source>
</evidence>
<evidence type="ECO:0000250" key="4">
    <source>
        <dbReference type="UniProtKB" id="P27605"/>
    </source>
</evidence>
<evidence type="ECO:0000305" key="5"/>
<sequence>MATRSPSVVISDDEPGYDLDLFCIPNHYAEDLEKVFIPHGLIMDRTERLARDVMKEMGGHHIVALCVLKGGYKFFADLLDYIKALNRNSDRSIPMTVDFIRLKSYCNDQSTGDIKVIGGDDLSTLTGKNVLIVEDIIDTGKTMQTLLSLVKQHNPKMVKVASLLVKRTPRSVGYRPDFVGFEIPDKFVVGYALDYNEYFRDLNHVCVISETGKAKYKA</sequence>
<name>HPRT_PIG</name>
<accession>Q45FY6</accession>
<accession>A0SNU9</accession>
<comment type="function">
    <text evidence="1">Converts guanine to guanosine monophosphate, and hypoxanthine to inosine monophosphate. Transfers the 5-phosphoribosyl group from 5-phosphoribosylpyrophosphate onto the purine. Plays a central role in the generation of purine nucleotides through the purine salvage pathway (By similarity).</text>
</comment>
<comment type="catalytic activity">
    <reaction evidence="2">
        <text>IMP + diphosphate = hypoxanthine + 5-phospho-alpha-D-ribose 1-diphosphate</text>
        <dbReference type="Rhea" id="RHEA:17973"/>
        <dbReference type="ChEBI" id="CHEBI:17368"/>
        <dbReference type="ChEBI" id="CHEBI:33019"/>
        <dbReference type="ChEBI" id="CHEBI:58017"/>
        <dbReference type="ChEBI" id="CHEBI:58053"/>
        <dbReference type="EC" id="2.4.2.8"/>
    </reaction>
    <physiologicalReaction direction="right-to-left" evidence="2">
        <dbReference type="Rhea" id="RHEA:17975"/>
    </physiologicalReaction>
</comment>
<comment type="catalytic activity">
    <reaction evidence="2">
        <text>GMP + diphosphate = guanine + 5-phospho-alpha-D-ribose 1-diphosphate</text>
        <dbReference type="Rhea" id="RHEA:25424"/>
        <dbReference type="ChEBI" id="CHEBI:16235"/>
        <dbReference type="ChEBI" id="CHEBI:33019"/>
        <dbReference type="ChEBI" id="CHEBI:58017"/>
        <dbReference type="ChEBI" id="CHEBI:58115"/>
        <dbReference type="EC" id="2.4.2.8"/>
    </reaction>
    <physiologicalReaction direction="right-to-left" evidence="2">
        <dbReference type="Rhea" id="RHEA:25426"/>
    </physiologicalReaction>
</comment>
<comment type="cofactor">
    <cofactor evidence="1">
        <name>Mg(2+)</name>
        <dbReference type="ChEBI" id="CHEBI:18420"/>
    </cofactor>
    <text evidence="1">Binds 2 magnesium ions per subunit. The magnesium ions are essentially bound to the substrate and have few direct interactions with the protein.</text>
</comment>
<comment type="pathway">
    <text>Purine metabolism; IMP biosynthesis via salvage pathway; IMP from hypoxanthine: step 1/1.</text>
</comment>
<comment type="subunit">
    <text evidence="1">Homotetramer.</text>
</comment>
<comment type="subcellular location">
    <subcellularLocation>
        <location evidence="1">Cytoplasm</location>
    </subcellularLocation>
</comment>
<comment type="similarity">
    <text evidence="5">Belongs to the purine/pyrimidine phosphoribosyltransferase family.</text>
</comment>
<protein>
    <recommendedName>
        <fullName>Hypoxanthine-guanine phosphoribosyltransferase</fullName>
        <shortName>HGPRT</shortName>
        <shortName>HGPRTase</shortName>
        <ecNumber evidence="2">2.4.2.8</ecNumber>
    </recommendedName>
</protein>
<keyword id="KW-0007">Acetylation</keyword>
<keyword id="KW-0963">Cytoplasm</keyword>
<keyword id="KW-0328">Glycosyltransferase</keyword>
<keyword id="KW-1017">Isopeptide bond</keyword>
<keyword id="KW-0460">Magnesium</keyword>
<keyword id="KW-0479">Metal-binding</keyword>
<keyword id="KW-0547">Nucleotide-binding</keyword>
<keyword id="KW-0597">Phosphoprotein</keyword>
<keyword id="KW-0660">Purine salvage</keyword>
<keyword id="KW-1185">Reference proteome</keyword>
<keyword id="KW-0808">Transferase</keyword>
<keyword id="KW-0832">Ubl conjugation</keyword>
<gene>
    <name type="primary">HPRT1</name>
    <name type="synonym">HPRT</name>
</gene>